<keyword id="KW-0256">Endoplasmic reticulum</keyword>
<keyword id="KW-0325">Glycoprotein</keyword>
<keyword id="KW-0472">Membrane</keyword>
<keyword id="KW-1185">Reference proteome</keyword>
<keyword id="KW-0732">Signal</keyword>
<keyword id="KW-0812">Transmembrane</keyword>
<keyword id="KW-1133">Transmembrane helix</keyword>
<protein>
    <recommendedName>
        <fullName>Transmembrane protein 178A</fullName>
    </recommendedName>
</protein>
<evidence type="ECO:0000255" key="1"/>
<evidence type="ECO:0000256" key="2">
    <source>
        <dbReference type="SAM" id="MobiDB-lite"/>
    </source>
</evidence>
<evidence type="ECO:0000269" key="3">
    <source>
    </source>
</evidence>
<evidence type="ECO:0000305" key="4"/>
<sequence>MEPRALVTALSLGLSLCSLGLLVTAIFTDHWYETDPRRHKESCERSRAGADPPDQKNRLMPLSHLPLRDSPPLGRRLLPGGPGRSDPESWRSLLGLGGLDAECGRPLFATYSGLWRKCYFLGIDRDIDTLILKGIAQRCTAIKYHFSQPIRLRNIPFNLTKTIQQDEWHLLHLRRITAGFLGMAVAVLLCGCIVATVSFFWEESLTQHVAGLLFLMTGIFCTISLCTYAASVSYDLNRVPKLIYSLPHDVEHGYSWSIFCAWCSLGFIVAAGGLCIAYPFISRTKIAHLKSGRDSTV</sequence>
<reference key="1">
    <citation type="journal article" date="2005" name="Science">
        <title>The transcriptional landscape of the mammalian genome.</title>
        <authorList>
            <person name="Carninci P."/>
            <person name="Kasukawa T."/>
            <person name="Katayama S."/>
            <person name="Gough J."/>
            <person name="Frith M.C."/>
            <person name="Maeda N."/>
            <person name="Oyama R."/>
            <person name="Ravasi T."/>
            <person name="Lenhard B."/>
            <person name="Wells C."/>
            <person name="Kodzius R."/>
            <person name="Shimokawa K."/>
            <person name="Bajic V.B."/>
            <person name="Brenner S.E."/>
            <person name="Batalov S."/>
            <person name="Forrest A.R."/>
            <person name="Zavolan M."/>
            <person name="Davis M.J."/>
            <person name="Wilming L.G."/>
            <person name="Aidinis V."/>
            <person name="Allen J.E."/>
            <person name="Ambesi-Impiombato A."/>
            <person name="Apweiler R."/>
            <person name="Aturaliya R.N."/>
            <person name="Bailey T.L."/>
            <person name="Bansal M."/>
            <person name="Baxter L."/>
            <person name="Beisel K.W."/>
            <person name="Bersano T."/>
            <person name="Bono H."/>
            <person name="Chalk A.M."/>
            <person name="Chiu K.P."/>
            <person name="Choudhary V."/>
            <person name="Christoffels A."/>
            <person name="Clutterbuck D.R."/>
            <person name="Crowe M.L."/>
            <person name="Dalla E."/>
            <person name="Dalrymple B.P."/>
            <person name="de Bono B."/>
            <person name="Della Gatta G."/>
            <person name="di Bernardo D."/>
            <person name="Down T."/>
            <person name="Engstrom P."/>
            <person name="Fagiolini M."/>
            <person name="Faulkner G."/>
            <person name="Fletcher C.F."/>
            <person name="Fukushima T."/>
            <person name="Furuno M."/>
            <person name="Futaki S."/>
            <person name="Gariboldi M."/>
            <person name="Georgii-Hemming P."/>
            <person name="Gingeras T.R."/>
            <person name="Gojobori T."/>
            <person name="Green R.E."/>
            <person name="Gustincich S."/>
            <person name="Harbers M."/>
            <person name="Hayashi Y."/>
            <person name="Hensch T.K."/>
            <person name="Hirokawa N."/>
            <person name="Hill D."/>
            <person name="Huminiecki L."/>
            <person name="Iacono M."/>
            <person name="Ikeo K."/>
            <person name="Iwama A."/>
            <person name="Ishikawa T."/>
            <person name="Jakt M."/>
            <person name="Kanapin A."/>
            <person name="Katoh M."/>
            <person name="Kawasawa Y."/>
            <person name="Kelso J."/>
            <person name="Kitamura H."/>
            <person name="Kitano H."/>
            <person name="Kollias G."/>
            <person name="Krishnan S.P."/>
            <person name="Kruger A."/>
            <person name="Kummerfeld S.K."/>
            <person name="Kurochkin I.V."/>
            <person name="Lareau L.F."/>
            <person name="Lazarevic D."/>
            <person name="Lipovich L."/>
            <person name="Liu J."/>
            <person name="Liuni S."/>
            <person name="McWilliam S."/>
            <person name="Madan Babu M."/>
            <person name="Madera M."/>
            <person name="Marchionni L."/>
            <person name="Matsuda H."/>
            <person name="Matsuzawa S."/>
            <person name="Miki H."/>
            <person name="Mignone F."/>
            <person name="Miyake S."/>
            <person name="Morris K."/>
            <person name="Mottagui-Tabar S."/>
            <person name="Mulder N."/>
            <person name="Nakano N."/>
            <person name="Nakauchi H."/>
            <person name="Ng P."/>
            <person name="Nilsson R."/>
            <person name="Nishiguchi S."/>
            <person name="Nishikawa S."/>
            <person name="Nori F."/>
            <person name="Ohara O."/>
            <person name="Okazaki Y."/>
            <person name="Orlando V."/>
            <person name="Pang K.C."/>
            <person name="Pavan W.J."/>
            <person name="Pavesi G."/>
            <person name="Pesole G."/>
            <person name="Petrovsky N."/>
            <person name="Piazza S."/>
            <person name="Reed J."/>
            <person name="Reid J.F."/>
            <person name="Ring B.Z."/>
            <person name="Ringwald M."/>
            <person name="Rost B."/>
            <person name="Ruan Y."/>
            <person name="Salzberg S.L."/>
            <person name="Sandelin A."/>
            <person name="Schneider C."/>
            <person name="Schoenbach C."/>
            <person name="Sekiguchi K."/>
            <person name="Semple C.A."/>
            <person name="Seno S."/>
            <person name="Sessa L."/>
            <person name="Sheng Y."/>
            <person name="Shibata Y."/>
            <person name="Shimada H."/>
            <person name="Shimada K."/>
            <person name="Silva D."/>
            <person name="Sinclair B."/>
            <person name="Sperling S."/>
            <person name="Stupka E."/>
            <person name="Sugiura K."/>
            <person name="Sultana R."/>
            <person name="Takenaka Y."/>
            <person name="Taki K."/>
            <person name="Tammoja K."/>
            <person name="Tan S.L."/>
            <person name="Tang S."/>
            <person name="Taylor M.S."/>
            <person name="Tegner J."/>
            <person name="Teichmann S.A."/>
            <person name="Ueda H.R."/>
            <person name="van Nimwegen E."/>
            <person name="Verardo R."/>
            <person name="Wei C.L."/>
            <person name="Yagi K."/>
            <person name="Yamanishi H."/>
            <person name="Zabarovsky E."/>
            <person name="Zhu S."/>
            <person name="Zimmer A."/>
            <person name="Hide W."/>
            <person name="Bult C."/>
            <person name="Grimmond S.M."/>
            <person name="Teasdale R.D."/>
            <person name="Liu E.T."/>
            <person name="Brusic V."/>
            <person name="Quackenbush J."/>
            <person name="Wahlestedt C."/>
            <person name="Mattick J.S."/>
            <person name="Hume D.A."/>
            <person name="Kai C."/>
            <person name="Sasaki D."/>
            <person name="Tomaru Y."/>
            <person name="Fukuda S."/>
            <person name="Kanamori-Katayama M."/>
            <person name="Suzuki M."/>
            <person name="Aoki J."/>
            <person name="Arakawa T."/>
            <person name="Iida J."/>
            <person name="Imamura K."/>
            <person name="Itoh M."/>
            <person name="Kato T."/>
            <person name="Kawaji H."/>
            <person name="Kawagashira N."/>
            <person name="Kawashima T."/>
            <person name="Kojima M."/>
            <person name="Kondo S."/>
            <person name="Konno H."/>
            <person name="Nakano K."/>
            <person name="Ninomiya N."/>
            <person name="Nishio T."/>
            <person name="Okada M."/>
            <person name="Plessy C."/>
            <person name="Shibata K."/>
            <person name="Shiraki T."/>
            <person name="Suzuki S."/>
            <person name="Tagami M."/>
            <person name="Waki K."/>
            <person name="Watahiki A."/>
            <person name="Okamura-Oho Y."/>
            <person name="Suzuki H."/>
            <person name="Kawai J."/>
            <person name="Hayashizaki Y."/>
        </authorList>
    </citation>
    <scope>NUCLEOTIDE SEQUENCE [LARGE SCALE MRNA]</scope>
    <source>
        <strain>C57BL/6J</strain>
        <tissue>Embryo</tissue>
        <tissue>Head</tissue>
    </source>
</reference>
<reference key="2">
    <citation type="journal article" date="2009" name="PLoS Biol.">
        <title>Lineage-specific biology revealed by a finished genome assembly of the mouse.</title>
        <authorList>
            <person name="Church D.M."/>
            <person name="Goodstadt L."/>
            <person name="Hillier L.W."/>
            <person name="Zody M.C."/>
            <person name="Goldstein S."/>
            <person name="She X."/>
            <person name="Bult C.J."/>
            <person name="Agarwala R."/>
            <person name="Cherry J.L."/>
            <person name="DiCuccio M."/>
            <person name="Hlavina W."/>
            <person name="Kapustin Y."/>
            <person name="Meric P."/>
            <person name="Maglott D."/>
            <person name="Birtle Z."/>
            <person name="Marques A.C."/>
            <person name="Graves T."/>
            <person name="Zhou S."/>
            <person name="Teague B."/>
            <person name="Potamousis K."/>
            <person name="Churas C."/>
            <person name="Place M."/>
            <person name="Herschleb J."/>
            <person name="Runnheim R."/>
            <person name="Forrest D."/>
            <person name="Amos-Landgraf J."/>
            <person name="Schwartz D.C."/>
            <person name="Cheng Z."/>
            <person name="Lindblad-Toh K."/>
            <person name="Eichler E.E."/>
            <person name="Ponting C.P."/>
        </authorList>
    </citation>
    <scope>NUCLEOTIDE SEQUENCE [LARGE SCALE GENOMIC DNA]</scope>
    <source>
        <strain>C57BL/6J</strain>
    </source>
</reference>
<reference key="3">
    <citation type="journal article" date="2015" name="Proc. Natl. Acad. Sci. U.S.A.">
        <title>Tmem178 acts in a novel negative feedback loop targeting NFATc1 to regulate bone mass.</title>
        <authorList>
            <person name="Decker C.E."/>
            <person name="Yang Z."/>
            <person name="Rimer R."/>
            <person name="Park-Min K.H."/>
            <person name="Macaubas C."/>
            <person name="Mellins E.D."/>
            <person name="Novack D.V."/>
            <person name="Faccio R."/>
        </authorList>
    </citation>
    <scope>FUNCTION</scope>
    <scope>SUBCELLULAR LOCATION</scope>
    <scope>TISSUE SPECIFICITY</scope>
    <scope>DISRUPTION PHENOTYPE</scope>
    <scope>INTERACTION WITH STIM1</scope>
</reference>
<feature type="signal peptide" evidence="1">
    <location>
        <begin position="1"/>
        <end position="25"/>
    </location>
</feature>
<feature type="chain" id="PRO_0000287281" description="Transmembrane protein 178A">
    <location>
        <begin position="26"/>
        <end position="297"/>
    </location>
</feature>
<feature type="topological domain" description="Extracellular" evidence="1">
    <location>
        <begin position="26"/>
        <end position="179"/>
    </location>
</feature>
<feature type="transmembrane region" description="Helical" evidence="1">
    <location>
        <begin position="180"/>
        <end position="200"/>
    </location>
</feature>
<feature type="topological domain" description="Cytoplasmic" evidence="1">
    <location>
        <begin position="201"/>
        <end position="208"/>
    </location>
</feature>
<feature type="transmembrane region" description="Helical" evidence="1">
    <location>
        <begin position="209"/>
        <end position="229"/>
    </location>
</feature>
<feature type="topological domain" description="Extracellular" evidence="1">
    <location>
        <begin position="230"/>
        <end position="257"/>
    </location>
</feature>
<feature type="transmembrane region" description="Helical" evidence="1">
    <location>
        <begin position="258"/>
        <end position="278"/>
    </location>
</feature>
<feature type="topological domain" description="Cytoplasmic" evidence="1">
    <location>
        <begin position="279"/>
        <end position="297"/>
    </location>
</feature>
<feature type="region of interest" description="Disordered" evidence="2">
    <location>
        <begin position="41"/>
        <end position="86"/>
    </location>
</feature>
<feature type="compositionally biased region" description="Basic and acidic residues" evidence="2">
    <location>
        <begin position="41"/>
        <end position="57"/>
    </location>
</feature>
<feature type="compositionally biased region" description="Low complexity" evidence="2">
    <location>
        <begin position="68"/>
        <end position="79"/>
    </location>
</feature>
<feature type="glycosylation site" description="N-linked (GlcNAc...) asparagine" evidence="1">
    <location>
        <position position="158"/>
    </location>
</feature>
<feature type="sequence conflict" description="In Ref. 1; BAB28655." evidence="4" ref="1">
    <original>RA</original>
    <variation>AR</variation>
    <location>
        <begin position="47"/>
        <end position="48"/>
    </location>
</feature>
<feature type="sequence conflict" description="In Ref. 1; BAC25428." evidence="4" ref="1">
    <original>G</original>
    <variation>S</variation>
    <location>
        <position position="134"/>
    </location>
</feature>
<feature type="sequence conflict" description="In Ref. 1; BAC25428." evidence="4" ref="1">
    <original>V</original>
    <variation>A</variation>
    <location>
        <position position="239"/>
    </location>
</feature>
<feature type="sequence conflict" description="In Ref. 1; BAB28655." evidence="4" ref="1">
    <original>K</original>
    <variation>E</variation>
    <location>
        <position position="241"/>
    </location>
</feature>
<feature type="sequence conflict" description="In Ref. 1; BAB28655." evidence="4" ref="1">
    <original>W</original>
    <variation>C</variation>
    <location>
        <position position="256"/>
    </location>
</feature>
<feature type="sequence conflict" description="In Ref. 1; BAB28655." evidence="4" ref="1">
    <original>G</original>
    <variation>S</variation>
    <location>
        <position position="266"/>
    </location>
</feature>
<feature type="sequence conflict" description="In Ref. 1; BAC25428/BAB28655." evidence="4" ref="1">
    <original>F</original>
    <variation>L</variation>
    <location>
        <position position="267"/>
    </location>
</feature>
<feature type="sequence conflict" description="In Ref. 1; BAC25428." evidence="4" ref="1">
    <original>IV</original>
    <variation>SL</variation>
    <location>
        <begin position="268"/>
        <end position="269"/>
    </location>
</feature>
<feature type="sequence conflict" description="In Ref. 1; BAB28655." evidence="4" ref="1">
    <original>F</original>
    <variation>C</variation>
    <location>
        <position position="280"/>
    </location>
</feature>
<feature type="sequence conflict" description="In Ref. 1; BAB28655." evidence="4" ref="1">
    <original>R</original>
    <variation>Q</variation>
    <location>
        <position position="283"/>
    </location>
</feature>
<accession>Q9CZ16</accession>
<accession>F8VPV2</accession>
<accession>Q8CEU4</accession>
<proteinExistence type="evidence at protein level"/>
<comment type="function">
    <text evidence="3">Acts as a negative regulator of osteoclast differentiation in basal and inflammatory conditions by regulating TNFSF11-induced Ca (2+) fluxes, thereby controlling the induction of NFATC1 (PubMed:26644563).</text>
</comment>
<comment type="subunit">
    <text evidence="3">Interacts with STIM1.</text>
</comment>
<comment type="subcellular location">
    <subcellularLocation>
        <location evidence="3">Endoplasmic reticulum membrane</location>
        <topology evidence="1">Multi-pass membrane protein</topology>
    </subcellularLocation>
</comment>
<comment type="tissue specificity">
    <text evidence="3">Highly expressed in the bone and its expression increases during osteoclastogenesis.</text>
</comment>
<comment type="disruption phenotype">
    <text evidence="3">Mice are osteopenic and are more susceptible to inflammatory bone loss, owing to enhanced osteoclast formation.</text>
</comment>
<comment type="similarity">
    <text evidence="4">Belongs to the TMEM178 family.</text>
</comment>
<comment type="sequence caution" evidence="4">
    <conflict type="frameshift">
        <sequence resource="EMBL-CDS" id="BAB28655"/>
    </conflict>
</comment>
<comment type="sequence caution" evidence="4">
    <conflict type="frameshift">
        <sequence resource="EMBL-CDS" id="BAC25428"/>
    </conflict>
</comment>
<dbReference type="EMBL" id="AK013110">
    <property type="protein sequence ID" value="BAB28655.1"/>
    <property type="status" value="ALT_FRAME"/>
    <property type="molecule type" value="mRNA"/>
</dbReference>
<dbReference type="EMBL" id="AK014196">
    <property type="protein sequence ID" value="BAC25428.1"/>
    <property type="status" value="ALT_FRAME"/>
    <property type="molecule type" value="mRNA"/>
</dbReference>
<dbReference type="EMBL" id="AC163903">
    <property type="status" value="NOT_ANNOTATED_CDS"/>
    <property type="molecule type" value="Genomic_DNA"/>
</dbReference>
<dbReference type="EMBL" id="AC165966">
    <property type="status" value="NOT_ANNOTATED_CDS"/>
    <property type="molecule type" value="Genomic_DNA"/>
</dbReference>
<dbReference type="CCDS" id="CCDS37705.1"/>
<dbReference type="RefSeq" id="NP_080792.2">
    <property type="nucleotide sequence ID" value="NM_026516.2"/>
</dbReference>
<dbReference type="FunCoup" id="Q9CZ16">
    <property type="interactions" value="167"/>
</dbReference>
<dbReference type="STRING" id="10090.ENSMUSP00000025092"/>
<dbReference type="GlyCosmos" id="Q9CZ16">
    <property type="glycosylation" value="1 site, No reported glycans"/>
</dbReference>
<dbReference type="GlyGen" id="Q9CZ16">
    <property type="glycosylation" value="1 site, 1 N-linked glycan (1 site)"/>
</dbReference>
<dbReference type="PhosphoSitePlus" id="Q9CZ16"/>
<dbReference type="PaxDb" id="10090-ENSMUSP00000025092"/>
<dbReference type="ProteomicsDB" id="254525"/>
<dbReference type="Antibodypedia" id="14741">
    <property type="antibodies" value="81 antibodies from 16 providers"/>
</dbReference>
<dbReference type="DNASU" id="68027"/>
<dbReference type="Ensembl" id="ENSMUST00000025092.5">
    <property type="protein sequence ID" value="ENSMUSP00000025092.5"/>
    <property type="gene ID" value="ENSMUSG00000024245.5"/>
</dbReference>
<dbReference type="GeneID" id="68027"/>
<dbReference type="KEGG" id="mmu:68027"/>
<dbReference type="UCSC" id="uc008drn.1">
    <property type="organism name" value="mouse"/>
</dbReference>
<dbReference type="AGR" id="MGI:1915277"/>
<dbReference type="CTD" id="68027"/>
<dbReference type="MGI" id="MGI:1915277">
    <property type="gene designation" value="Tmem178"/>
</dbReference>
<dbReference type="VEuPathDB" id="HostDB:ENSMUSG00000024245"/>
<dbReference type="eggNOG" id="ENOG502R2WV">
    <property type="taxonomic scope" value="Eukaryota"/>
</dbReference>
<dbReference type="GeneTree" id="ENSGT00390000015299"/>
<dbReference type="HOGENOM" id="CLU_961492_0_0_1"/>
<dbReference type="InParanoid" id="Q9CZ16"/>
<dbReference type="OMA" id="ATYAGLW"/>
<dbReference type="OrthoDB" id="9941453at2759"/>
<dbReference type="PhylomeDB" id="Q9CZ16"/>
<dbReference type="TreeFam" id="TF331307"/>
<dbReference type="BioGRID-ORCS" id="68027">
    <property type="hits" value="0 hits in 76 CRISPR screens"/>
</dbReference>
<dbReference type="PRO" id="PR:Q9CZ16"/>
<dbReference type="Proteomes" id="UP000000589">
    <property type="component" value="Chromosome 17"/>
</dbReference>
<dbReference type="RNAct" id="Q9CZ16">
    <property type="molecule type" value="protein"/>
</dbReference>
<dbReference type="Bgee" id="ENSMUSG00000024245">
    <property type="expression patterns" value="Expressed in cerebellum lobe and 163 other cell types or tissues"/>
</dbReference>
<dbReference type="GO" id="GO:0005789">
    <property type="term" value="C:endoplasmic reticulum membrane"/>
    <property type="evidence" value="ECO:0000314"/>
    <property type="project" value="UniProtKB"/>
</dbReference>
<dbReference type="GO" id="GO:0045671">
    <property type="term" value="P:negative regulation of osteoclast differentiation"/>
    <property type="evidence" value="ECO:0000315"/>
    <property type="project" value="UniProtKB"/>
</dbReference>
<dbReference type="GO" id="GO:0051480">
    <property type="term" value="P:regulation of cytosolic calcium ion concentration"/>
    <property type="evidence" value="ECO:0000315"/>
    <property type="project" value="UniProtKB"/>
</dbReference>
<dbReference type="FunFam" id="1.20.140.150:FF:000024">
    <property type="entry name" value="Transmembrane protein 178A"/>
    <property type="match status" value="1"/>
</dbReference>
<dbReference type="Gene3D" id="1.20.140.150">
    <property type="match status" value="1"/>
</dbReference>
<dbReference type="InterPro" id="IPR004031">
    <property type="entry name" value="PMP22/EMP/MP20/Claudin"/>
</dbReference>
<dbReference type="InterPro" id="IPR039625">
    <property type="entry name" value="T178A/B"/>
</dbReference>
<dbReference type="PANTHER" id="PTHR32005:SF4">
    <property type="entry name" value="TRANSMEMBRANE PROTEIN 178A"/>
    <property type="match status" value="1"/>
</dbReference>
<dbReference type="PANTHER" id="PTHR32005">
    <property type="entry name" value="TRANSMEMBRANE PROTEIN 178B-RELATED"/>
    <property type="match status" value="1"/>
</dbReference>
<dbReference type="Pfam" id="PF13903">
    <property type="entry name" value="Claudin_2"/>
    <property type="match status" value="1"/>
</dbReference>
<gene>
    <name type="primary">Tmem178a</name>
    <name type="synonym">Tmem178</name>
</gene>
<organism>
    <name type="scientific">Mus musculus</name>
    <name type="common">Mouse</name>
    <dbReference type="NCBI Taxonomy" id="10090"/>
    <lineage>
        <taxon>Eukaryota</taxon>
        <taxon>Metazoa</taxon>
        <taxon>Chordata</taxon>
        <taxon>Craniata</taxon>
        <taxon>Vertebrata</taxon>
        <taxon>Euteleostomi</taxon>
        <taxon>Mammalia</taxon>
        <taxon>Eutheria</taxon>
        <taxon>Euarchontoglires</taxon>
        <taxon>Glires</taxon>
        <taxon>Rodentia</taxon>
        <taxon>Myomorpha</taxon>
        <taxon>Muroidea</taxon>
        <taxon>Muridae</taxon>
        <taxon>Murinae</taxon>
        <taxon>Mus</taxon>
        <taxon>Mus</taxon>
    </lineage>
</organism>
<name>T178A_MOUSE</name>